<protein>
    <recommendedName>
        <fullName>Zinc finger protein 653</fullName>
    </recommendedName>
    <alternativeName>
        <fullName>67 kDa zinc finger protein</fullName>
    </alternativeName>
    <alternativeName>
        <fullName>Zinc finger protein Zip67</fullName>
    </alternativeName>
</protein>
<evidence type="ECO:0000255" key="1"/>
<evidence type="ECO:0000255" key="2">
    <source>
        <dbReference type="PROSITE-ProRule" id="PRU00042"/>
    </source>
</evidence>
<evidence type="ECO:0000256" key="3">
    <source>
        <dbReference type="SAM" id="MobiDB-lite"/>
    </source>
</evidence>
<evidence type="ECO:0000269" key="4">
    <source>
    </source>
</evidence>
<evidence type="ECO:0000269" key="5">
    <source>
    </source>
</evidence>
<evidence type="ECO:0000305" key="6"/>
<keyword id="KW-0238">DNA-binding</keyword>
<keyword id="KW-0479">Metal-binding</keyword>
<keyword id="KW-0539">Nucleus</keyword>
<keyword id="KW-1267">Proteomics identification</keyword>
<keyword id="KW-1185">Reference proteome</keyword>
<keyword id="KW-0677">Repeat</keyword>
<keyword id="KW-0678">Repressor</keyword>
<keyword id="KW-0804">Transcription</keyword>
<keyword id="KW-0805">Transcription regulation</keyword>
<keyword id="KW-0862">Zinc</keyword>
<keyword id="KW-0863">Zinc-finger</keyword>
<dbReference type="EMBL" id="AY072704">
    <property type="protein sequence ID" value="AAL66763.1"/>
    <property type="molecule type" value="mRNA"/>
</dbReference>
<dbReference type="EMBL" id="BC014187">
    <property type="protein sequence ID" value="AAH14187.1"/>
    <property type="molecule type" value="mRNA"/>
</dbReference>
<dbReference type="EMBL" id="BC016816">
    <property type="protein sequence ID" value="AAH16816.1"/>
    <property type="molecule type" value="mRNA"/>
</dbReference>
<dbReference type="CCDS" id="CCDS12261.1"/>
<dbReference type="RefSeq" id="NP_620138.2">
    <property type="nucleotide sequence ID" value="NM_138783.4"/>
</dbReference>
<dbReference type="SMR" id="Q96CK0"/>
<dbReference type="BioGRID" id="125464">
    <property type="interactions" value="55"/>
</dbReference>
<dbReference type="FunCoup" id="Q96CK0">
    <property type="interactions" value="1623"/>
</dbReference>
<dbReference type="IntAct" id="Q96CK0">
    <property type="interactions" value="48"/>
</dbReference>
<dbReference type="STRING" id="9606.ENSP00000293771"/>
<dbReference type="iPTMnet" id="Q96CK0"/>
<dbReference type="PhosphoSitePlus" id="Q96CK0"/>
<dbReference type="BioMuta" id="ZNF653"/>
<dbReference type="DMDM" id="74760763"/>
<dbReference type="jPOST" id="Q96CK0"/>
<dbReference type="MassIVE" id="Q96CK0"/>
<dbReference type="PaxDb" id="9606-ENSP00000293771"/>
<dbReference type="PeptideAtlas" id="Q96CK0"/>
<dbReference type="ProteomicsDB" id="76191"/>
<dbReference type="Pumba" id="Q96CK0"/>
<dbReference type="Antibodypedia" id="25888">
    <property type="antibodies" value="19 antibodies from 8 providers"/>
</dbReference>
<dbReference type="DNASU" id="115950"/>
<dbReference type="Ensembl" id="ENST00000293771.10">
    <property type="protein sequence ID" value="ENSP00000293771.3"/>
    <property type="gene ID" value="ENSG00000161914.10"/>
</dbReference>
<dbReference type="GeneID" id="115950"/>
<dbReference type="KEGG" id="hsa:115950"/>
<dbReference type="MANE-Select" id="ENST00000293771.10">
    <property type="protein sequence ID" value="ENSP00000293771.3"/>
    <property type="RefSeq nucleotide sequence ID" value="NM_138783.4"/>
    <property type="RefSeq protein sequence ID" value="NP_620138.2"/>
</dbReference>
<dbReference type="UCSC" id="uc002mrz.2">
    <property type="organism name" value="human"/>
</dbReference>
<dbReference type="AGR" id="HGNC:25196"/>
<dbReference type="CTD" id="115950"/>
<dbReference type="DisGeNET" id="115950"/>
<dbReference type="GeneCards" id="ZNF653"/>
<dbReference type="HGNC" id="HGNC:25196">
    <property type="gene designation" value="ZNF653"/>
</dbReference>
<dbReference type="HPA" id="ENSG00000161914">
    <property type="expression patterns" value="Tissue enhanced (brain)"/>
</dbReference>
<dbReference type="MIM" id="611371">
    <property type="type" value="gene"/>
</dbReference>
<dbReference type="neXtProt" id="NX_Q96CK0"/>
<dbReference type="OpenTargets" id="ENSG00000161914"/>
<dbReference type="PharmGKB" id="PA134989597"/>
<dbReference type="VEuPathDB" id="HostDB:ENSG00000161914"/>
<dbReference type="eggNOG" id="KOG1721">
    <property type="taxonomic scope" value="Eukaryota"/>
</dbReference>
<dbReference type="GeneTree" id="ENSGT00940000160257"/>
<dbReference type="HOGENOM" id="CLU_037389_0_0_1"/>
<dbReference type="InParanoid" id="Q96CK0"/>
<dbReference type="OMA" id="CAVMEGV"/>
<dbReference type="OrthoDB" id="8685330at2759"/>
<dbReference type="PAN-GO" id="Q96CK0">
    <property type="GO annotations" value="3 GO annotations based on evolutionary models"/>
</dbReference>
<dbReference type="PhylomeDB" id="Q96CK0"/>
<dbReference type="TreeFam" id="TF332664"/>
<dbReference type="PathwayCommons" id="Q96CK0"/>
<dbReference type="SignaLink" id="Q96CK0"/>
<dbReference type="BioGRID-ORCS" id="115950">
    <property type="hits" value="18 hits in 1177 CRISPR screens"/>
</dbReference>
<dbReference type="GenomeRNAi" id="115950"/>
<dbReference type="Pharos" id="Q96CK0">
    <property type="development level" value="Tbio"/>
</dbReference>
<dbReference type="PRO" id="PR:Q96CK0"/>
<dbReference type="Proteomes" id="UP000005640">
    <property type="component" value="Chromosome 19"/>
</dbReference>
<dbReference type="RNAct" id="Q96CK0">
    <property type="molecule type" value="protein"/>
</dbReference>
<dbReference type="Bgee" id="ENSG00000161914">
    <property type="expression patterns" value="Expressed in right hemisphere of cerebellum and 99 other cell types or tissues"/>
</dbReference>
<dbReference type="ExpressionAtlas" id="Q96CK0">
    <property type="expression patterns" value="baseline and differential"/>
</dbReference>
<dbReference type="GO" id="GO:0005576">
    <property type="term" value="C:extracellular region"/>
    <property type="evidence" value="ECO:0007669"/>
    <property type="project" value="GOC"/>
</dbReference>
<dbReference type="GO" id="GO:0005634">
    <property type="term" value="C:nucleus"/>
    <property type="evidence" value="ECO:0000318"/>
    <property type="project" value="GO_Central"/>
</dbReference>
<dbReference type="GO" id="GO:0050682">
    <property type="term" value="F:AF-2 domain binding"/>
    <property type="evidence" value="ECO:0000315"/>
    <property type="project" value="UniProtKB"/>
</dbReference>
<dbReference type="GO" id="GO:0003677">
    <property type="term" value="F:DNA binding"/>
    <property type="evidence" value="ECO:0007669"/>
    <property type="project" value="UniProtKB-KW"/>
</dbReference>
<dbReference type="GO" id="GO:0140297">
    <property type="term" value="F:DNA-binding transcription factor binding"/>
    <property type="evidence" value="ECO:0000353"/>
    <property type="project" value="UniProtKB"/>
</dbReference>
<dbReference type="GO" id="GO:0003712">
    <property type="term" value="F:transcription coregulator activity"/>
    <property type="evidence" value="ECO:0000318"/>
    <property type="project" value="GO_Central"/>
</dbReference>
<dbReference type="GO" id="GO:0003714">
    <property type="term" value="F:transcription corepressor activity"/>
    <property type="evidence" value="ECO:0000314"/>
    <property type="project" value="UniProtKB"/>
</dbReference>
<dbReference type="GO" id="GO:0008270">
    <property type="term" value="F:zinc ion binding"/>
    <property type="evidence" value="ECO:0007669"/>
    <property type="project" value="UniProtKB-KW"/>
</dbReference>
<dbReference type="GO" id="GO:1900116">
    <property type="term" value="P:extracellular negative regulation of signal transduction"/>
    <property type="evidence" value="ECO:0000314"/>
    <property type="project" value="UniProtKB"/>
</dbReference>
<dbReference type="GO" id="GO:0000122">
    <property type="term" value="P:negative regulation of transcription by RNA polymerase II"/>
    <property type="evidence" value="ECO:0000314"/>
    <property type="project" value="UniProtKB"/>
</dbReference>
<dbReference type="GO" id="GO:0006357">
    <property type="term" value="P:regulation of transcription by RNA polymerase II"/>
    <property type="evidence" value="ECO:0000318"/>
    <property type="project" value="GO_Central"/>
</dbReference>
<dbReference type="FunFam" id="3.30.160.60:FF:000183">
    <property type="entry name" value="E3 ubiquitin-protein ligase ZFP91"/>
    <property type="match status" value="1"/>
</dbReference>
<dbReference type="FunFam" id="3.30.160.60:FF:000651">
    <property type="entry name" value="Putative zinc finger protein 653"/>
    <property type="match status" value="1"/>
</dbReference>
<dbReference type="FunFam" id="3.30.160.60:FF:000685">
    <property type="entry name" value="Zinc finger protein 653"/>
    <property type="match status" value="1"/>
</dbReference>
<dbReference type="Gene3D" id="3.30.160.60">
    <property type="entry name" value="Classic Zinc Finger"/>
    <property type="match status" value="4"/>
</dbReference>
<dbReference type="InterPro" id="IPR051061">
    <property type="entry name" value="Zinc_finger_trans_reg"/>
</dbReference>
<dbReference type="InterPro" id="IPR036236">
    <property type="entry name" value="Znf_C2H2_sf"/>
</dbReference>
<dbReference type="InterPro" id="IPR013087">
    <property type="entry name" value="Znf_C2H2_type"/>
</dbReference>
<dbReference type="PANTHER" id="PTHR46179">
    <property type="entry name" value="ZINC FINGER PROTEIN"/>
    <property type="match status" value="1"/>
</dbReference>
<dbReference type="PANTHER" id="PTHR46179:SF9">
    <property type="entry name" value="ZINC FINGER PROTEIN 653"/>
    <property type="match status" value="1"/>
</dbReference>
<dbReference type="Pfam" id="PF00096">
    <property type="entry name" value="zf-C2H2"/>
    <property type="match status" value="3"/>
</dbReference>
<dbReference type="SMART" id="SM00355">
    <property type="entry name" value="ZnF_C2H2"/>
    <property type="match status" value="5"/>
</dbReference>
<dbReference type="SUPFAM" id="SSF57667">
    <property type="entry name" value="beta-beta-alpha zinc fingers"/>
    <property type="match status" value="3"/>
</dbReference>
<dbReference type="PROSITE" id="PS00028">
    <property type="entry name" value="ZINC_FINGER_C2H2_1"/>
    <property type="match status" value="5"/>
</dbReference>
<dbReference type="PROSITE" id="PS50157">
    <property type="entry name" value="ZINC_FINGER_C2H2_2"/>
    <property type="match status" value="4"/>
</dbReference>
<accession>Q96CK0</accession>
<accession>Q96AS7</accession>
<name>ZN653_HUMAN</name>
<comment type="function">
    <text evidence="4">Transcriptional repressor. May repress NR5A1, PPARG, NR1H3, NR4A2, ESR1 and NR3C1 transcriptional activity.</text>
</comment>
<comment type="subunit">
    <text evidence="4">Interacts with NR5A1.</text>
</comment>
<comment type="interaction">
    <interactant intactId="EBI-12217757">
        <id>Q96CK0</id>
    </interactant>
    <interactant intactId="EBI-742887">
        <id>Q8TAP6</id>
        <label>CEP76</label>
    </interactant>
    <organismsDiffer>false</organismsDiffer>
    <experiments>3</experiments>
</comment>
<comment type="interaction">
    <interactant intactId="EBI-12217757">
        <id>Q96CK0</id>
    </interactant>
    <interactant intactId="EBI-2341787">
        <id>Q17RB8</id>
        <label>LONRF1</label>
    </interactant>
    <organismsDiffer>false</organismsDiffer>
    <experiments>3</experiments>
</comment>
<comment type="interaction">
    <interactant intactId="EBI-12217757">
        <id>Q96CK0</id>
    </interactant>
    <interactant intactId="EBI-1004115">
        <id>Q15691</id>
        <label>MAPRE1</label>
    </interactant>
    <organismsDiffer>false</organismsDiffer>
    <experiments>3</experiments>
</comment>
<comment type="interaction">
    <interactant intactId="EBI-12217757">
        <id>Q96CK0</id>
    </interactant>
    <interactant intactId="EBI-725997">
        <id>Q8WV44</id>
        <label>TRIM41</label>
    </interactant>
    <organismsDiffer>false</organismsDiffer>
    <experiments>3</experiments>
</comment>
<comment type="subcellular location">
    <subcellularLocation>
        <location evidence="6">Nucleus</location>
    </subcellularLocation>
</comment>
<comment type="tissue specificity">
    <text>Highly expressed in testis, cerebellum, temporal lobe, hippocampus and the adrenal gland. Moderately expressed in spleen, uterus, thymus, pancreas, kidney, stomach and rectum.</text>
</comment>
<comment type="similarity">
    <text evidence="6">Belongs to the krueppel C2H2-type zinc-finger protein family.</text>
</comment>
<proteinExistence type="evidence at protein level"/>
<organism>
    <name type="scientific">Homo sapiens</name>
    <name type="common">Human</name>
    <dbReference type="NCBI Taxonomy" id="9606"/>
    <lineage>
        <taxon>Eukaryota</taxon>
        <taxon>Metazoa</taxon>
        <taxon>Chordata</taxon>
        <taxon>Craniata</taxon>
        <taxon>Vertebrata</taxon>
        <taxon>Euteleostomi</taxon>
        <taxon>Mammalia</taxon>
        <taxon>Eutheria</taxon>
        <taxon>Euarchontoglires</taxon>
        <taxon>Primates</taxon>
        <taxon>Haplorrhini</taxon>
        <taxon>Catarrhini</taxon>
        <taxon>Hominidae</taxon>
        <taxon>Homo</taxon>
    </lineage>
</organism>
<sequence>MAERALEPEAEAEAEAGAGGEAAAEEGAAGRKARGRPRLTESDRARRRLESRKKYDVRRVYLGEAHGPWVDLRRRSGWSDAKLAAYLISLERGQRSGRHGKPWEQVPKKPKRKKRRRRNVNCLKNVVIWYEDHKHRCPYEPHLAELDPTFGLYTTAVWQCEAGHRYFQDLHSPLKPLSDSDPDSDKVGNGLVAGSSDSSSSGSASDSEESPEGQPVKAAAAAAAATPTSPVGSSGLITQEGVHIPFDVHHVESLAEQGTPLCSNPAGNGPEALETVVCVPVPVQVGAGPSALFENVPQEALGEVVASCPMPGMVPGSQVIIIAGPGYDALTAEGIHLNMAAGSGVPGSGLGEEVPCAMMEGVAAYTQTEPEGSQPSTMDATAVAGIETKKEKEDLCLLKKEEKEEPVAPELATTVPESAEPEAEADGEELDGSDMSAIIYEIPKEPEKRRRSKRSRVMDADGLLEMFHCPYEGCSQVYVALSSFQNHVNLVHRKGKTKVCPHPGCGKKFYLSNHLRRHMIIHSGVREFTCETCGKSFKRKNHLEVHRRTHTGETPLQCEICGYQCRQRASLNWHMKKHTAEVQYNFTCDRCGKRFEKLDSVKFHTLKSHPDHKPT</sequence>
<reference key="1">
    <citation type="journal article" date="2003" name="Mol. Endocrinol.">
        <title>Cloning and characterization of a novel zinc finger protein that modulates the transcriptional activity of nuclear receptors.</title>
        <authorList>
            <person name="Borud B."/>
            <person name="Mellgren G."/>
            <person name="Lund J."/>
            <person name="Bakke M."/>
        </authorList>
    </citation>
    <scope>NUCLEOTIDE SEQUENCE [MRNA]</scope>
    <scope>FUNCTION</scope>
    <scope>INTERACTION WITH NR5A1</scope>
    <source>
        <tissue>Testis</tissue>
    </source>
</reference>
<reference key="2">
    <citation type="journal article" date="2004" name="Genome Res.">
        <title>The status, quality, and expansion of the NIH full-length cDNA project: the Mammalian Gene Collection (MGC).</title>
        <authorList>
            <consortium name="The MGC Project Team"/>
        </authorList>
    </citation>
    <scope>NUCLEOTIDE SEQUENCE [LARGE SCALE MRNA]</scope>
    <scope>VARIANT ARG-54</scope>
    <source>
        <tissue>Brain</tissue>
        <tissue>Eye</tissue>
    </source>
</reference>
<gene>
    <name type="primary">ZNF653</name>
    <name type="synonym">ZIP67</name>
</gene>
<feature type="chain" id="PRO_0000253344" description="Zinc finger protein 653">
    <location>
        <begin position="1"/>
        <end position="615"/>
    </location>
</feature>
<feature type="zinc finger region" description="C2H2-type 1" evidence="2">
    <location>
        <begin position="467"/>
        <end position="492"/>
    </location>
</feature>
<feature type="zinc finger region" description="C2H2-type 2" evidence="2">
    <location>
        <begin position="498"/>
        <end position="522"/>
    </location>
</feature>
<feature type="zinc finger region" description="C2H2-type 3" evidence="2">
    <location>
        <begin position="528"/>
        <end position="550"/>
    </location>
</feature>
<feature type="zinc finger region" description="C2H2-type 4" evidence="2">
    <location>
        <begin position="556"/>
        <end position="578"/>
    </location>
</feature>
<feature type="zinc finger region" description="C2H2-type 5" evidence="2">
    <location>
        <begin position="586"/>
        <end position="609"/>
    </location>
</feature>
<feature type="region of interest" description="Disordered" evidence="3">
    <location>
        <begin position="1"/>
        <end position="48"/>
    </location>
</feature>
<feature type="region of interest" description="Disordered" evidence="3">
    <location>
        <begin position="95"/>
        <end position="117"/>
    </location>
</feature>
<feature type="region of interest" description="Disordered" evidence="3">
    <location>
        <begin position="176"/>
        <end position="236"/>
    </location>
</feature>
<feature type="region of interest" description="Disordered" evidence="3">
    <location>
        <begin position="401"/>
        <end position="432"/>
    </location>
</feature>
<feature type="short sequence motif" description="Nuclear localization signal" evidence="1">
    <location>
        <begin position="107"/>
        <end position="118"/>
    </location>
</feature>
<feature type="short sequence motif" description="Nuclear localization signal" evidence="1">
    <location>
        <begin position="445"/>
        <end position="451"/>
    </location>
</feature>
<feature type="compositionally biased region" description="Basic residues" evidence="3">
    <location>
        <begin position="108"/>
        <end position="117"/>
    </location>
</feature>
<feature type="compositionally biased region" description="Low complexity" evidence="3">
    <location>
        <begin position="193"/>
        <end position="205"/>
    </location>
</feature>
<feature type="compositionally biased region" description="Polar residues" evidence="3">
    <location>
        <begin position="226"/>
        <end position="236"/>
    </location>
</feature>
<feature type="compositionally biased region" description="Acidic residues" evidence="3">
    <location>
        <begin position="419"/>
        <end position="432"/>
    </location>
</feature>
<feature type="sequence variant" id="VAR_028076" description="In dbSNP:rs17851437." evidence="5">
    <original>K</original>
    <variation>R</variation>
    <location>
        <position position="54"/>
    </location>
</feature>
<feature type="sequence variant" id="VAR_057438" description="In dbSNP:rs35556595.">
    <original>A</original>
    <variation>T</variation>
    <location>
        <position position="329"/>
    </location>
</feature>